<protein>
    <recommendedName>
        <fullName>SET domain-containing protein DDB_G0283443</fullName>
        <ecNumber>2.1.1.-</ecNumber>
    </recommendedName>
</protein>
<organism>
    <name type="scientific">Dictyostelium discoideum</name>
    <name type="common">Social amoeba</name>
    <dbReference type="NCBI Taxonomy" id="44689"/>
    <lineage>
        <taxon>Eukaryota</taxon>
        <taxon>Amoebozoa</taxon>
        <taxon>Evosea</taxon>
        <taxon>Eumycetozoa</taxon>
        <taxon>Dictyostelia</taxon>
        <taxon>Dictyosteliales</taxon>
        <taxon>Dictyosteliaceae</taxon>
        <taxon>Dictyostelium</taxon>
    </lineage>
</organism>
<feature type="chain" id="PRO_0000389439" description="SET domain-containing protein DDB_G0283443">
    <location>
        <begin position="1"/>
        <end position="393"/>
    </location>
</feature>
<feature type="domain" description="SET" evidence="2">
    <location>
        <begin position="17"/>
        <end position="312"/>
    </location>
</feature>
<gene>
    <name type="ORF">DDB_G0283443</name>
</gene>
<comment type="function">
    <text evidence="1">Probable methyltransferase.</text>
</comment>
<comment type="similarity">
    <text evidence="2">Belongs to the class V-like SAM-binding methyltransferase superfamily.</text>
</comment>
<reference key="1">
    <citation type="journal article" date="2005" name="Nature">
        <title>The genome of the social amoeba Dictyostelium discoideum.</title>
        <authorList>
            <person name="Eichinger L."/>
            <person name="Pachebat J.A."/>
            <person name="Gloeckner G."/>
            <person name="Rajandream M.A."/>
            <person name="Sucgang R."/>
            <person name="Berriman M."/>
            <person name="Song J."/>
            <person name="Olsen R."/>
            <person name="Szafranski K."/>
            <person name="Xu Q."/>
            <person name="Tunggal B."/>
            <person name="Kummerfeld S."/>
            <person name="Madera M."/>
            <person name="Konfortov B.A."/>
            <person name="Rivero F."/>
            <person name="Bankier A.T."/>
            <person name="Lehmann R."/>
            <person name="Hamlin N."/>
            <person name="Davies R."/>
            <person name="Gaudet P."/>
            <person name="Fey P."/>
            <person name="Pilcher K."/>
            <person name="Chen G."/>
            <person name="Saunders D."/>
            <person name="Sodergren E.J."/>
            <person name="Davis P."/>
            <person name="Kerhornou A."/>
            <person name="Nie X."/>
            <person name="Hall N."/>
            <person name="Anjard C."/>
            <person name="Hemphill L."/>
            <person name="Bason N."/>
            <person name="Farbrother P."/>
            <person name="Desany B."/>
            <person name="Just E."/>
            <person name="Morio T."/>
            <person name="Rost R."/>
            <person name="Churcher C.M."/>
            <person name="Cooper J."/>
            <person name="Haydock S."/>
            <person name="van Driessche N."/>
            <person name="Cronin A."/>
            <person name="Goodhead I."/>
            <person name="Muzny D.M."/>
            <person name="Mourier T."/>
            <person name="Pain A."/>
            <person name="Lu M."/>
            <person name="Harper D."/>
            <person name="Lindsay R."/>
            <person name="Hauser H."/>
            <person name="James K.D."/>
            <person name="Quiles M."/>
            <person name="Madan Babu M."/>
            <person name="Saito T."/>
            <person name="Buchrieser C."/>
            <person name="Wardroper A."/>
            <person name="Felder M."/>
            <person name="Thangavelu M."/>
            <person name="Johnson D."/>
            <person name="Knights A."/>
            <person name="Loulseged H."/>
            <person name="Mungall K.L."/>
            <person name="Oliver K."/>
            <person name="Price C."/>
            <person name="Quail M.A."/>
            <person name="Urushihara H."/>
            <person name="Hernandez J."/>
            <person name="Rabbinowitsch E."/>
            <person name="Steffen D."/>
            <person name="Sanders M."/>
            <person name="Ma J."/>
            <person name="Kohara Y."/>
            <person name="Sharp S."/>
            <person name="Simmonds M.N."/>
            <person name="Spiegler S."/>
            <person name="Tivey A."/>
            <person name="Sugano S."/>
            <person name="White B."/>
            <person name="Walker D."/>
            <person name="Woodward J.R."/>
            <person name="Winckler T."/>
            <person name="Tanaka Y."/>
            <person name="Shaulsky G."/>
            <person name="Schleicher M."/>
            <person name="Weinstock G.M."/>
            <person name="Rosenthal A."/>
            <person name="Cox E.C."/>
            <person name="Chisholm R.L."/>
            <person name="Gibbs R.A."/>
            <person name="Loomis W.F."/>
            <person name="Platzer M."/>
            <person name="Kay R.R."/>
            <person name="Williams J.G."/>
            <person name="Dear P.H."/>
            <person name="Noegel A.A."/>
            <person name="Barrell B.G."/>
            <person name="Kuspa A."/>
        </authorList>
    </citation>
    <scope>NUCLEOTIDE SEQUENCE [LARGE SCALE GENOMIC DNA]</scope>
    <source>
        <strain>AX4</strain>
    </source>
</reference>
<dbReference type="EC" id="2.1.1.-"/>
<dbReference type="EMBL" id="AAFI02000055">
    <property type="protein sequence ID" value="EAL65706.1"/>
    <property type="molecule type" value="Genomic_DNA"/>
</dbReference>
<dbReference type="RefSeq" id="XP_639077.1">
    <property type="nucleotide sequence ID" value="XM_633985.1"/>
</dbReference>
<dbReference type="SMR" id="Q54R14"/>
<dbReference type="PaxDb" id="44689-DDB0220713"/>
<dbReference type="EnsemblProtists" id="EAL65706">
    <property type="protein sequence ID" value="EAL65706"/>
    <property type="gene ID" value="DDB_G0283443"/>
</dbReference>
<dbReference type="GeneID" id="8624102"/>
<dbReference type="KEGG" id="ddi:DDB_G0283443"/>
<dbReference type="dictyBase" id="DDB_G0283443"/>
<dbReference type="VEuPathDB" id="AmoebaDB:DDB_G0283443"/>
<dbReference type="eggNOG" id="KOG2084">
    <property type="taxonomic scope" value="Eukaryota"/>
</dbReference>
<dbReference type="HOGENOM" id="CLU_702894_0_0_1"/>
<dbReference type="InParanoid" id="Q54R14"/>
<dbReference type="OMA" id="CACTICA"/>
<dbReference type="PhylomeDB" id="Q54R14"/>
<dbReference type="Reactome" id="R-DDI-3214841">
    <property type="pathway name" value="PKMTs methylate histone lysines"/>
</dbReference>
<dbReference type="PRO" id="PR:Q54R14"/>
<dbReference type="Proteomes" id="UP000002195">
    <property type="component" value="Chromosome 4"/>
</dbReference>
<dbReference type="GO" id="GO:0005634">
    <property type="term" value="C:nucleus"/>
    <property type="evidence" value="ECO:0000318"/>
    <property type="project" value="GO_Central"/>
</dbReference>
<dbReference type="GO" id="GO:0008168">
    <property type="term" value="F:methyltransferase activity"/>
    <property type="evidence" value="ECO:0007669"/>
    <property type="project" value="UniProtKB-KW"/>
</dbReference>
<dbReference type="GO" id="GO:0032259">
    <property type="term" value="P:methylation"/>
    <property type="evidence" value="ECO:0007669"/>
    <property type="project" value="UniProtKB-KW"/>
</dbReference>
<dbReference type="CDD" id="cd20071">
    <property type="entry name" value="SET_SMYD"/>
    <property type="match status" value="1"/>
</dbReference>
<dbReference type="Gene3D" id="1.10.220.160">
    <property type="match status" value="1"/>
</dbReference>
<dbReference type="Gene3D" id="6.10.140.2220">
    <property type="match status" value="1"/>
</dbReference>
<dbReference type="Gene3D" id="2.170.270.10">
    <property type="entry name" value="SET domain"/>
    <property type="match status" value="1"/>
</dbReference>
<dbReference type="InterPro" id="IPR050869">
    <property type="entry name" value="H3K4_H4K5_MeTrfase"/>
</dbReference>
<dbReference type="InterPro" id="IPR001214">
    <property type="entry name" value="SET_dom"/>
</dbReference>
<dbReference type="InterPro" id="IPR046341">
    <property type="entry name" value="SET_dom_sf"/>
</dbReference>
<dbReference type="PANTHER" id="PTHR12197:SF251">
    <property type="entry name" value="EG:BACR7C10.4 PROTEIN"/>
    <property type="match status" value="1"/>
</dbReference>
<dbReference type="PANTHER" id="PTHR12197">
    <property type="entry name" value="HISTONE-LYSINE N-METHYLTRANSFERASE SMYD"/>
    <property type="match status" value="1"/>
</dbReference>
<dbReference type="Pfam" id="PF00856">
    <property type="entry name" value="SET"/>
    <property type="match status" value="1"/>
</dbReference>
<dbReference type="SMART" id="SM00317">
    <property type="entry name" value="SET"/>
    <property type="match status" value="1"/>
</dbReference>
<dbReference type="SUPFAM" id="SSF82199">
    <property type="entry name" value="SET domain"/>
    <property type="match status" value="1"/>
</dbReference>
<dbReference type="PROSITE" id="PS50280">
    <property type="entry name" value="SET"/>
    <property type="match status" value="1"/>
</dbReference>
<evidence type="ECO:0000250" key="1"/>
<evidence type="ECO:0000255" key="2">
    <source>
        <dbReference type="PROSITE-ProRule" id="PRU00190"/>
    </source>
</evidence>
<accession>Q54R14</accession>
<proteinExistence type="inferred from homology"/>
<name>Y3443_DICDI</name>
<keyword id="KW-0489">Methyltransferase</keyword>
<keyword id="KW-1185">Reference proteome</keyword>
<keyword id="KW-0949">S-adenosyl-L-methionine</keyword>
<keyword id="KW-0808">Transferase</keyword>
<sequence>MENNNNNNKNDNEINFKKIEINETLESGKFIESKIDMKLGELIIKVQSPMCFSFHKHLVNQFCFNCFSNSHEINNAKFNKFKVDINKNYIIRCNNCKLIYFCSDECFEKVMSIESFQDSTSTNIHTPLECLILSNYHDQTISPKINTLHDQTENRMIINYLSKIAYSTNNNNKFKLLLIEMNQLIGDFNNDNNNQTLSLNEIKNIKNKSFNLRKLFNNFFFNIDKVIIEELYAKSQRNSFGLWKNSDECFGLSMYGNQTIYNNNNDKDDNISISYFNHSCFPNCVRVQENQSISIYSLIPIKKGDELSISYIDIRMSKNDRLLHLKEIYYFECKCKRCTLPPLSNLSLEIEKTIENYTCKNQSIKCTGILYLPPFNKIQRICNFCHWKEPINN</sequence>